<reference key="1">
    <citation type="journal article" date="2008" name="J. Bacteriol.">
        <title>Insights into the environmental resistance gene pool from the genome sequence of the multidrug-resistant environmental isolate Escherichia coli SMS-3-5.</title>
        <authorList>
            <person name="Fricke W.F."/>
            <person name="Wright M.S."/>
            <person name="Lindell A.H."/>
            <person name="Harkins D.M."/>
            <person name="Baker-Austin C."/>
            <person name="Ravel J."/>
            <person name="Stepanauskas R."/>
        </authorList>
    </citation>
    <scope>NUCLEOTIDE SEQUENCE [LARGE SCALE GENOMIC DNA]</scope>
    <source>
        <strain>SMS-3-5 / SECEC</strain>
    </source>
</reference>
<organism>
    <name type="scientific">Escherichia coli (strain SMS-3-5 / SECEC)</name>
    <dbReference type="NCBI Taxonomy" id="439855"/>
    <lineage>
        <taxon>Bacteria</taxon>
        <taxon>Pseudomonadati</taxon>
        <taxon>Pseudomonadota</taxon>
        <taxon>Gammaproteobacteria</taxon>
        <taxon>Enterobacterales</taxon>
        <taxon>Enterobacteriaceae</taxon>
        <taxon>Escherichia</taxon>
    </lineage>
</organism>
<evidence type="ECO:0000255" key="1">
    <source>
        <dbReference type="HAMAP-Rule" id="MF_00636"/>
    </source>
</evidence>
<protein>
    <recommendedName>
        <fullName evidence="1">RNase adapter protein RapZ</fullName>
    </recommendedName>
</protein>
<accession>B1LGH1</accession>
<comment type="function">
    <text evidence="1">Modulates the synthesis of GlmS, by affecting the processing and stability of the regulatory small RNA GlmZ. When glucosamine-6-phosphate (GlcN6P) concentrations are high in the cell, RapZ binds GlmZ and targets it to cleavage by RNase E. Consequently, GlmZ is inactivated and unable to activate GlmS synthesis. Under low GlcN6P concentrations, RapZ is sequestered and inactivated by an other regulatory small RNA, GlmY, preventing GlmZ degradation and leading to synthesis of GlmS.</text>
</comment>
<comment type="subunit">
    <text evidence="1">Homotrimer.</text>
</comment>
<comment type="similarity">
    <text evidence="1">Belongs to the RapZ-like family. RapZ subfamily.</text>
</comment>
<sequence length="284" mass="32492">MVLMIVSGRSGSGKSVALRALEDMGFYCVDNLPVVLLPDLARTLADREISAAVSIDVRNMPESPEIFEQAMSNLPDAFSPQLLFLDADRNTLIRRYSDTRRLHPLSSKNLSLESAIDKESDLLEPLRSRADLIVDTSEMSVHELAEMLRTRLLGKRERELTMVFESFGFKHGIPIDADYVFDVRFLPNPHWDPKLRPMTGLDKPVAAFLDRHTEVHNFIYQTRSYLELWLPMLETNNRSYLTVAIGCTGGKHRSVYIAEQLADYFRSRGKNVQSRHRTLEKRKP</sequence>
<proteinExistence type="inferred from homology"/>
<name>RAPZ_ECOSM</name>
<keyword id="KW-0067">ATP-binding</keyword>
<keyword id="KW-0342">GTP-binding</keyword>
<keyword id="KW-0547">Nucleotide-binding</keyword>
<keyword id="KW-0694">RNA-binding</keyword>
<gene>
    <name evidence="1" type="primary">rapZ</name>
    <name type="ordered locus">EcSMS35_3501</name>
</gene>
<feature type="chain" id="PRO_1000130755" description="RNase adapter protein RapZ">
    <location>
        <begin position="1"/>
        <end position="284"/>
    </location>
</feature>
<feature type="region of interest" description="RNA-binding" evidence="1">
    <location>
        <begin position="266"/>
        <end position="284"/>
    </location>
</feature>
<feature type="binding site" evidence="1">
    <location>
        <begin position="8"/>
        <end position="15"/>
    </location>
    <ligand>
        <name>ATP</name>
        <dbReference type="ChEBI" id="CHEBI:30616"/>
    </ligand>
</feature>
<feature type="binding site" evidence="1">
    <location>
        <begin position="56"/>
        <end position="59"/>
    </location>
    <ligand>
        <name>GTP</name>
        <dbReference type="ChEBI" id="CHEBI:37565"/>
    </ligand>
</feature>
<dbReference type="EMBL" id="CP000970">
    <property type="protein sequence ID" value="ACB15792.1"/>
    <property type="molecule type" value="Genomic_DNA"/>
</dbReference>
<dbReference type="RefSeq" id="WP_000243741.1">
    <property type="nucleotide sequence ID" value="NC_010498.1"/>
</dbReference>
<dbReference type="SMR" id="B1LGH1"/>
<dbReference type="GeneID" id="93778776"/>
<dbReference type="KEGG" id="ecm:EcSMS35_3501"/>
<dbReference type="HOGENOM" id="CLU_059558_1_1_6"/>
<dbReference type="Proteomes" id="UP000007011">
    <property type="component" value="Chromosome"/>
</dbReference>
<dbReference type="GO" id="GO:0005524">
    <property type="term" value="F:ATP binding"/>
    <property type="evidence" value="ECO:0007669"/>
    <property type="project" value="UniProtKB-UniRule"/>
</dbReference>
<dbReference type="GO" id="GO:0005525">
    <property type="term" value="F:GTP binding"/>
    <property type="evidence" value="ECO:0007669"/>
    <property type="project" value="UniProtKB-UniRule"/>
</dbReference>
<dbReference type="GO" id="GO:0003723">
    <property type="term" value="F:RNA binding"/>
    <property type="evidence" value="ECO:0007669"/>
    <property type="project" value="UniProtKB-KW"/>
</dbReference>
<dbReference type="Gene3D" id="3.40.50.300">
    <property type="entry name" value="P-loop containing nucleotide triphosphate hydrolases"/>
    <property type="match status" value="1"/>
</dbReference>
<dbReference type="HAMAP" id="MF_00636">
    <property type="entry name" value="RapZ_like"/>
    <property type="match status" value="1"/>
</dbReference>
<dbReference type="InterPro" id="IPR027417">
    <property type="entry name" value="P-loop_NTPase"/>
</dbReference>
<dbReference type="InterPro" id="IPR005337">
    <property type="entry name" value="RapZ-like"/>
</dbReference>
<dbReference type="InterPro" id="IPR053930">
    <property type="entry name" value="RapZ-like_N"/>
</dbReference>
<dbReference type="InterPro" id="IPR053931">
    <property type="entry name" value="RapZ_C"/>
</dbReference>
<dbReference type="NCBIfam" id="NF003828">
    <property type="entry name" value="PRK05416.1"/>
    <property type="match status" value="1"/>
</dbReference>
<dbReference type="PANTHER" id="PTHR30448">
    <property type="entry name" value="RNASE ADAPTER PROTEIN RAPZ"/>
    <property type="match status" value="1"/>
</dbReference>
<dbReference type="PANTHER" id="PTHR30448:SF0">
    <property type="entry name" value="RNASE ADAPTER PROTEIN RAPZ"/>
    <property type="match status" value="1"/>
</dbReference>
<dbReference type="Pfam" id="PF22740">
    <property type="entry name" value="PapZ_C"/>
    <property type="match status" value="1"/>
</dbReference>
<dbReference type="Pfam" id="PF03668">
    <property type="entry name" value="RapZ-like_N"/>
    <property type="match status" value="1"/>
</dbReference>
<dbReference type="PIRSF" id="PIRSF005052">
    <property type="entry name" value="P-loopkin"/>
    <property type="match status" value="1"/>
</dbReference>
<dbReference type="SUPFAM" id="SSF52540">
    <property type="entry name" value="P-loop containing nucleoside triphosphate hydrolases"/>
    <property type="match status" value="1"/>
</dbReference>